<organism>
    <name type="scientific">Lactobacillus acidophilus (strain ATCC 700396 / NCK56 / N2 / NCFM)</name>
    <dbReference type="NCBI Taxonomy" id="272621"/>
    <lineage>
        <taxon>Bacteria</taxon>
        <taxon>Bacillati</taxon>
        <taxon>Bacillota</taxon>
        <taxon>Bacilli</taxon>
        <taxon>Lactobacillales</taxon>
        <taxon>Lactobacillaceae</taxon>
        <taxon>Lactobacillus</taxon>
    </lineage>
</organism>
<name>RL2_LACAC</name>
<keyword id="KW-1185">Reference proteome</keyword>
<keyword id="KW-0687">Ribonucleoprotein</keyword>
<keyword id="KW-0689">Ribosomal protein</keyword>
<keyword id="KW-0694">RNA-binding</keyword>
<keyword id="KW-0699">rRNA-binding</keyword>
<gene>
    <name evidence="1" type="primary">rplB</name>
    <name type="ordered locus">LBA0294</name>
</gene>
<proteinExistence type="inferred from homology"/>
<protein>
    <recommendedName>
        <fullName evidence="1">Large ribosomal subunit protein uL2</fullName>
    </recommendedName>
    <alternativeName>
        <fullName evidence="3">50S ribosomal protein L2</fullName>
    </alternativeName>
</protein>
<accession>Q5FM87</accession>
<reference key="1">
    <citation type="journal article" date="2005" name="Proc. Natl. Acad. Sci. U.S.A.">
        <title>Complete genome sequence of the probiotic lactic acid bacterium Lactobacillus acidophilus NCFM.</title>
        <authorList>
            <person name="Altermann E."/>
            <person name="Russell W.M."/>
            <person name="Azcarate-Peril M.A."/>
            <person name="Barrangou R."/>
            <person name="Buck B.L."/>
            <person name="McAuliffe O."/>
            <person name="Souther N."/>
            <person name="Dobson A."/>
            <person name="Duong T."/>
            <person name="Callanan M."/>
            <person name="Lick S."/>
            <person name="Hamrick A."/>
            <person name="Cano R."/>
            <person name="Klaenhammer T.R."/>
        </authorList>
    </citation>
    <scope>NUCLEOTIDE SEQUENCE [LARGE SCALE GENOMIC DNA]</scope>
    <source>
        <strain>ATCC 700396 / NCK56 / N2 / NCFM</strain>
    </source>
</reference>
<comment type="function">
    <text evidence="1">One of the primary rRNA binding proteins. Required for association of the 30S and 50S subunits to form the 70S ribosome, for tRNA binding and peptide bond formation. It has been suggested to have peptidyltransferase activity; this is somewhat controversial. Makes several contacts with the 16S rRNA in the 70S ribosome.</text>
</comment>
<comment type="subunit">
    <text evidence="1">Part of the 50S ribosomal subunit. Forms a bridge to the 30S subunit in the 70S ribosome.</text>
</comment>
<comment type="similarity">
    <text evidence="1">Belongs to the universal ribosomal protein uL2 family.</text>
</comment>
<dbReference type="EMBL" id="CP000033">
    <property type="protein sequence ID" value="AAV42187.1"/>
    <property type="molecule type" value="Genomic_DNA"/>
</dbReference>
<dbReference type="RefSeq" id="WP_011254111.1">
    <property type="nucleotide sequence ID" value="NC_006814.3"/>
</dbReference>
<dbReference type="RefSeq" id="YP_193218.1">
    <property type="nucleotide sequence ID" value="NC_006814.3"/>
</dbReference>
<dbReference type="SMR" id="Q5FM87"/>
<dbReference type="STRING" id="272621.LBA0294"/>
<dbReference type="GeneID" id="93290598"/>
<dbReference type="KEGG" id="lac:LBA0294"/>
<dbReference type="PATRIC" id="fig|272621.13.peg.279"/>
<dbReference type="eggNOG" id="COG0090">
    <property type="taxonomic scope" value="Bacteria"/>
</dbReference>
<dbReference type="HOGENOM" id="CLU_036235_2_1_9"/>
<dbReference type="OrthoDB" id="9778722at2"/>
<dbReference type="BioCyc" id="LACI272621:G1G49-288-MONOMER"/>
<dbReference type="Proteomes" id="UP000006381">
    <property type="component" value="Chromosome"/>
</dbReference>
<dbReference type="GO" id="GO:0015934">
    <property type="term" value="C:large ribosomal subunit"/>
    <property type="evidence" value="ECO:0007669"/>
    <property type="project" value="InterPro"/>
</dbReference>
<dbReference type="GO" id="GO:0019843">
    <property type="term" value="F:rRNA binding"/>
    <property type="evidence" value="ECO:0007669"/>
    <property type="project" value="UniProtKB-UniRule"/>
</dbReference>
<dbReference type="GO" id="GO:0003735">
    <property type="term" value="F:structural constituent of ribosome"/>
    <property type="evidence" value="ECO:0007669"/>
    <property type="project" value="InterPro"/>
</dbReference>
<dbReference type="GO" id="GO:0016740">
    <property type="term" value="F:transferase activity"/>
    <property type="evidence" value="ECO:0007669"/>
    <property type="project" value="InterPro"/>
</dbReference>
<dbReference type="GO" id="GO:0002181">
    <property type="term" value="P:cytoplasmic translation"/>
    <property type="evidence" value="ECO:0007669"/>
    <property type="project" value="TreeGrafter"/>
</dbReference>
<dbReference type="FunFam" id="2.30.30.30:FF:000001">
    <property type="entry name" value="50S ribosomal protein L2"/>
    <property type="match status" value="1"/>
</dbReference>
<dbReference type="FunFam" id="2.40.50.140:FF:000003">
    <property type="entry name" value="50S ribosomal protein L2"/>
    <property type="match status" value="1"/>
</dbReference>
<dbReference type="FunFam" id="4.10.950.10:FF:000001">
    <property type="entry name" value="50S ribosomal protein L2"/>
    <property type="match status" value="1"/>
</dbReference>
<dbReference type="Gene3D" id="2.30.30.30">
    <property type="match status" value="1"/>
</dbReference>
<dbReference type="Gene3D" id="2.40.50.140">
    <property type="entry name" value="Nucleic acid-binding proteins"/>
    <property type="match status" value="1"/>
</dbReference>
<dbReference type="Gene3D" id="4.10.950.10">
    <property type="entry name" value="Ribosomal protein L2, domain 3"/>
    <property type="match status" value="1"/>
</dbReference>
<dbReference type="HAMAP" id="MF_01320_B">
    <property type="entry name" value="Ribosomal_uL2_B"/>
    <property type="match status" value="1"/>
</dbReference>
<dbReference type="InterPro" id="IPR012340">
    <property type="entry name" value="NA-bd_OB-fold"/>
</dbReference>
<dbReference type="InterPro" id="IPR014722">
    <property type="entry name" value="Rib_uL2_dom2"/>
</dbReference>
<dbReference type="InterPro" id="IPR002171">
    <property type="entry name" value="Ribosomal_uL2"/>
</dbReference>
<dbReference type="InterPro" id="IPR005880">
    <property type="entry name" value="Ribosomal_uL2_bac/org-type"/>
</dbReference>
<dbReference type="InterPro" id="IPR022669">
    <property type="entry name" value="Ribosomal_uL2_C"/>
</dbReference>
<dbReference type="InterPro" id="IPR022671">
    <property type="entry name" value="Ribosomal_uL2_CS"/>
</dbReference>
<dbReference type="InterPro" id="IPR014726">
    <property type="entry name" value="Ribosomal_uL2_dom3"/>
</dbReference>
<dbReference type="InterPro" id="IPR022666">
    <property type="entry name" value="Ribosomal_uL2_RNA-bd_dom"/>
</dbReference>
<dbReference type="InterPro" id="IPR008991">
    <property type="entry name" value="Translation_prot_SH3-like_sf"/>
</dbReference>
<dbReference type="NCBIfam" id="TIGR01171">
    <property type="entry name" value="rplB_bact"/>
    <property type="match status" value="1"/>
</dbReference>
<dbReference type="PANTHER" id="PTHR13691:SF5">
    <property type="entry name" value="LARGE RIBOSOMAL SUBUNIT PROTEIN UL2M"/>
    <property type="match status" value="1"/>
</dbReference>
<dbReference type="PANTHER" id="PTHR13691">
    <property type="entry name" value="RIBOSOMAL PROTEIN L2"/>
    <property type="match status" value="1"/>
</dbReference>
<dbReference type="Pfam" id="PF00181">
    <property type="entry name" value="Ribosomal_L2"/>
    <property type="match status" value="1"/>
</dbReference>
<dbReference type="Pfam" id="PF03947">
    <property type="entry name" value="Ribosomal_L2_C"/>
    <property type="match status" value="1"/>
</dbReference>
<dbReference type="PIRSF" id="PIRSF002158">
    <property type="entry name" value="Ribosomal_L2"/>
    <property type="match status" value="1"/>
</dbReference>
<dbReference type="SMART" id="SM01383">
    <property type="entry name" value="Ribosomal_L2"/>
    <property type="match status" value="1"/>
</dbReference>
<dbReference type="SMART" id="SM01382">
    <property type="entry name" value="Ribosomal_L2_C"/>
    <property type="match status" value="1"/>
</dbReference>
<dbReference type="SUPFAM" id="SSF50249">
    <property type="entry name" value="Nucleic acid-binding proteins"/>
    <property type="match status" value="1"/>
</dbReference>
<dbReference type="SUPFAM" id="SSF50104">
    <property type="entry name" value="Translation proteins SH3-like domain"/>
    <property type="match status" value="1"/>
</dbReference>
<dbReference type="PROSITE" id="PS00467">
    <property type="entry name" value="RIBOSOMAL_L2"/>
    <property type="match status" value="1"/>
</dbReference>
<sequence>MAIKIYKPTTNGRRHMTSSDFAEITKTKPEKTLLESQSHTAGRNSYGRITVRHRGGGHKQKYRIIDFKRNKDNVKAVVNAIEYDPNRTANIALLHYTDGIKAYILAPKGLKVGDIVESGDSVDIKPGNALALKNIPTGTSIHNIELKPGKGGQLVRSAGASAQVLGFDGNYTLVRLQSGEVRKILSSCRATIGVVGNEQHSLIQLGKAGRKRWLGKRPQSRGSVMNPNDHPHGGGEGKAPVGRPQPMTPWGKKARGIKTRDVKKASEKLIIRHRKGSK</sequence>
<feature type="chain" id="PRO_0000237195" description="Large ribosomal subunit protein uL2">
    <location>
        <begin position="1"/>
        <end position="278"/>
    </location>
</feature>
<feature type="region of interest" description="Disordered" evidence="2">
    <location>
        <begin position="210"/>
        <end position="278"/>
    </location>
</feature>
<feature type="compositionally biased region" description="Basic residues" evidence="2">
    <location>
        <begin position="210"/>
        <end position="219"/>
    </location>
</feature>
<feature type="compositionally biased region" description="Basic and acidic residues" evidence="2">
    <location>
        <begin position="258"/>
        <end position="270"/>
    </location>
</feature>
<evidence type="ECO:0000255" key="1">
    <source>
        <dbReference type="HAMAP-Rule" id="MF_01320"/>
    </source>
</evidence>
<evidence type="ECO:0000256" key="2">
    <source>
        <dbReference type="SAM" id="MobiDB-lite"/>
    </source>
</evidence>
<evidence type="ECO:0000305" key="3"/>